<reference key="1">
    <citation type="journal article" date="1995" name="Science">
        <title>The minimal gene complement of Mycoplasma genitalium.</title>
        <authorList>
            <person name="Fraser C.M."/>
            <person name="Gocayne J.D."/>
            <person name="White O."/>
            <person name="Adams M.D."/>
            <person name="Clayton R.A."/>
            <person name="Fleischmann R.D."/>
            <person name="Bult C.J."/>
            <person name="Kerlavage A.R."/>
            <person name="Sutton G.G."/>
            <person name="Kelley J.M."/>
            <person name="Fritchman J.L."/>
            <person name="Weidman J.F."/>
            <person name="Small K.V."/>
            <person name="Sandusky M."/>
            <person name="Fuhrmann J.L."/>
            <person name="Nguyen D.T."/>
            <person name="Utterback T.R."/>
            <person name="Saudek D.M."/>
            <person name="Phillips C.A."/>
            <person name="Merrick J.M."/>
            <person name="Tomb J.-F."/>
            <person name="Dougherty B.A."/>
            <person name="Bott K.F."/>
            <person name="Hu P.-C."/>
            <person name="Lucier T.S."/>
            <person name="Peterson S.N."/>
            <person name="Smith H.O."/>
            <person name="Hutchison C.A. III"/>
            <person name="Venter J.C."/>
        </authorList>
    </citation>
    <scope>NUCLEOTIDE SEQUENCE [LARGE SCALE GENOMIC DNA]</scope>
    <source>
        <strain>ATCC 33530 / DSM 19775 / NCTC 10195 / G37</strain>
    </source>
</reference>
<comment type="function">
    <text evidence="1">Required for a late step of 50S ribosomal subunit assembly. Has GTPase activity. Binds to the 23S rRNA (By similarity).</text>
</comment>
<comment type="subcellular location">
    <subcellularLocation>
        <location evidence="1">Cytoplasm</location>
    </subcellularLocation>
</comment>
<comment type="similarity">
    <text evidence="2">Belongs to the TRAFAC class YlqF/YawG GTPase family. MTG1 subfamily.</text>
</comment>
<gene>
    <name type="primary">rbgA</name>
    <name type="ordered locus">MG442</name>
</gene>
<sequence>MDTYTSAKINWFPGHMKKIHDQLKKLSSQIDGIIEIVDARAPTLTHNSEIISYFLNKPKLILALKTDLAQYKPNKKILFGSLKEPFKLKKKVLKTLTTLFANKRQQLKAKGLLIKQFRLAVIGMPNVGKSSLINLLINKNHLKVANRAGITKSLNWIQISPELLLSDTPGVFLKRIDEIQIGYKLVLTNVIRREVVNIEEVGMFAFNYLKKHYKQLLPFEADSFINFLEKFAKVRGLIKKANELNTNLACEIFINELINGKYGKLSYELN</sequence>
<organism>
    <name type="scientific">Mycoplasma genitalium (strain ATCC 33530 / DSM 19775 / NCTC 10195 / G37)</name>
    <name type="common">Mycoplasmoides genitalium</name>
    <dbReference type="NCBI Taxonomy" id="243273"/>
    <lineage>
        <taxon>Bacteria</taxon>
        <taxon>Bacillati</taxon>
        <taxon>Mycoplasmatota</taxon>
        <taxon>Mycoplasmoidales</taxon>
        <taxon>Mycoplasmoidaceae</taxon>
        <taxon>Mycoplasmoides</taxon>
    </lineage>
</organism>
<dbReference type="EMBL" id="L43967">
    <property type="protein sequence ID" value="AAC72462.1"/>
    <property type="molecule type" value="Genomic_DNA"/>
</dbReference>
<dbReference type="PIR" id="H64248">
    <property type="entry name" value="H64248"/>
</dbReference>
<dbReference type="SMR" id="Q49435"/>
<dbReference type="FunCoup" id="Q49435">
    <property type="interactions" value="176"/>
</dbReference>
<dbReference type="STRING" id="243273.MG_442"/>
<dbReference type="KEGG" id="mge:MG_442"/>
<dbReference type="eggNOG" id="COG1161">
    <property type="taxonomic scope" value="Bacteria"/>
</dbReference>
<dbReference type="HOGENOM" id="CLU_011106_1_0_14"/>
<dbReference type="InParanoid" id="Q49435"/>
<dbReference type="OrthoDB" id="9779790at2"/>
<dbReference type="Proteomes" id="UP000000807">
    <property type="component" value="Chromosome"/>
</dbReference>
<dbReference type="GO" id="GO:0005737">
    <property type="term" value="C:cytoplasm"/>
    <property type="evidence" value="ECO:0007669"/>
    <property type="project" value="UniProtKB-SubCell"/>
</dbReference>
<dbReference type="GO" id="GO:0005525">
    <property type="term" value="F:GTP binding"/>
    <property type="evidence" value="ECO:0007669"/>
    <property type="project" value="UniProtKB-KW"/>
</dbReference>
<dbReference type="GO" id="GO:0003924">
    <property type="term" value="F:GTPase activity"/>
    <property type="evidence" value="ECO:0000318"/>
    <property type="project" value="GO_Central"/>
</dbReference>
<dbReference type="GO" id="GO:0042254">
    <property type="term" value="P:ribosome biogenesis"/>
    <property type="evidence" value="ECO:0007669"/>
    <property type="project" value="UniProtKB-KW"/>
</dbReference>
<dbReference type="GO" id="GO:0006412">
    <property type="term" value="P:translation"/>
    <property type="evidence" value="ECO:0000318"/>
    <property type="project" value="GO_Central"/>
</dbReference>
<dbReference type="CDD" id="cd01856">
    <property type="entry name" value="YlqF"/>
    <property type="match status" value="1"/>
</dbReference>
<dbReference type="Gene3D" id="1.10.1580.10">
    <property type="match status" value="1"/>
</dbReference>
<dbReference type="Gene3D" id="3.40.50.300">
    <property type="entry name" value="P-loop containing nucleotide triphosphate hydrolases"/>
    <property type="match status" value="1"/>
</dbReference>
<dbReference type="InterPro" id="IPR030378">
    <property type="entry name" value="G_CP_dom"/>
</dbReference>
<dbReference type="InterPro" id="IPR006073">
    <property type="entry name" value="GTP-bd"/>
</dbReference>
<dbReference type="InterPro" id="IPR023179">
    <property type="entry name" value="GTP-bd_ortho_bundle_sf"/>
</dbReference>
<dbReference type="InterPro" id="IPR019991">
    <property type="entry name" value="GTP-bd_ribosome_bgen"/>
</dbReference>
<dbReference type="InterPro" id="IPR016478">
    <property type="entry name" value="GTPase_MTG1"/>
</dbReference>
<dbReference type="InterPro" id="IPR027417">
    <property type="entry name" value="P-loop_NTPase"/>
</dbReference>
<dbReference type="NCBIfam" id="TIGR03596">
    <property type="entry name" value="GTPase_YlqF"/>
    <property type="match status" value="1"/>
</dbReference>
<dbReference type="PANTHER" id="PTHR45782">
    <property type="entry name" value="MITOCHONDRIAL RIBOSOME-ASSOCIATED GTPASE 1"/>
    <property type="match status" value="1"/>
</dbReference>
<dbReference type="PANTHER" id="PTHR45782:SF4">
    <property type="entry name" value="MITOCHONDRIAL RIBOSOME-ASSOCIATED GTPASE 1"/>
    <property type="match status" value="1"/>
</dbReference>
<dbReference type="Pfam" id="PF01926">
    <property type="entry name" value="MMR_HSR1"/>
    <property type="match status" value="1"/>
</dbReference>
<dbReference type="PIRSF" id="PIRSF006230">
    <property type="entry name" value="MG442"/>
    <property type="match status" value="1"/>
</dbReference>
<dbReference type="SUPFAM" id="SSF52540">
    <property type="entry name" value="P-loop containing nucleoside triphosphate hydrolases"/>
    <property type="match status" value="1"/>
</dbReference>
<dbReference type="PROSITE" id="PS51721">
    <property type="entry name" value="G_CP"/>
    <property type="match status" value="1"/>
</dbReference>
<name>RBGA_MYCGE</name>
<accession>Q49435</accession>
<protein>
    <recommendedName>
        <fullName>Probable ribosome biogenesis GTPase A</fullName>
    </recommendedName>
</protein>
<keyword id="KW-0963">Cytoplasm</keyword>
<keyword id="KW-0342">GTP-binding</keyword>
<keyword id="KW-0378">Hydrolase</keyword>
<keyword id="KW-0547">Nucleotide-binding</keyword>
<keyword id="KW-1185">Reference proteome</keyword>
<keyword id="KW-0690">Ribosome biogenesis</keyword>
<evidence type="ECO:0000250" key="1"/>
<evidence type="ECO:0000255" key="2">
    <source>
        <dbReference type="PROSITE-ProRule" id="PRU01058"/>
    </source>
</evidence>
<feature type="chain" id="PRO_0000210614" description="Probable ribosome biogenesis GTPase A">
    <location>
        <begin position="1"/>
        <end position="270"/>
    </location>
</feature>
<feature type="domain" description="CP-type G" evidence="2">
    <location>
        <begin position="20"/>
        <end position="174"/>
    </location>
</feature>
<feature type="binding site" evidence="1">
    <location>
        <begin position="126"/>
        <end position="131"/>
    </location>
    <ligand>
        <name>GTP</name>
        <dbReference type="ChEBI" id="CHEBI:37565"/>
    </ligand>
</feature>
<feature type="binding site" evidence="1">
    <location>
        <position position="170"/>
    </location>
    <ligand>
        <name>GTP</name>
        <dbReference type="ChEBI" id="CHEBI:37565"/>
    </ligand>
</feature>
<proteinExistence type="inferred from homology"/>